<name>CLDN1_HUMAN</name>
<proteinExistence type="evidence at protein level"/>
<sequence length="253" mass="28603">MDNRFATAFVIACVLSLISTIYMAASIGTDFWYEYRSPVQENSSDLNKSIWDEFISDEADEKTYNDALFRYNGTVGLWRRCITIPKNMHWYSPPERTESFDVVTKCVSFTLTEQFMEKFVDPGNHNSGIDLLRTYLWRCQFLLPFVSLGLMCFGALIGLCACICRSLYPTIATGILHLLAGLCTLGSVSCYVAGIELLHQKLELPDNVSGEFGWSFCLACVSAPLQFMASALFIWAAHTNRKEYTLMKAYRVA</sequence>
<comment type="function">
    <text evidence="4">Plays a role in negatively regulating the permeability of cells to small molecules.</text>
</comment>
<comment type="interaction">
    <interactant intactId="EBI-4319704">
        <id>Q9NY35</id>
    </interactant>
    <interactant intactId="EBI-3905522">
        <id>P25024</id>
        <label>CXCR1</label>
    </interactant>
    <organismsDiffer>false</organismsDiffer>
    <experiments>3</experiments>
</comment>
<comment type="interaction">
    <interactant intactId="EBI-4319704">
        <id>Q9NY35</id>
    </interactant>
    <interactant intactId="EBI-12808020">
        <id>Q9BZJ8</id>
        <label>GPR61</label>
    </interactant>
    <organismsDiffer>false</organismsDiffer>
    <experiments>3</experiments>
</comment>
<comment type="interaction">
    <interactant intactId="EBI-4319704">
        <id>Q9NY35</id>
    </interactant>
    <interactant intactId="EBI-20009624">
        <id>Q9NPG8</id>
        <label>ZDHHC4</label>
    </interactant>
    <organismsDiffer>false</organismsDiffer>
    <experiments>3</experiments>
</comment>
<comment type="subcellular location">
    <subcellularLocation>
        <location evidence="4 5">Cell junction</location>
        <location evidence="4 5">Tight junction</location>
    </subcellularLocation>
    <subcellularLocation>
        <location evidence="9">Cell membrane</location>
        <topology evidence="1">Multi-pass membrane protein</topology>
    </subcellularLocation>
</comment>
<comment type="alternative products">
    <event type="alternative splicing"/>
    <isoform>
        <id>Q9NY35-1</id>
        <name>1</name>
        <sequence type="displayed"/>
    </isoform>
    <isoform>
        <id>Q9NY35-2</id>
        <name>2</name>
        <sequence type="described" ref="VSP_013156 VSP_013157"/>
    </isoform>
    <isoform>
        <id>Q9NY35-3</id>
        <name>3</name>
        <sequence type="described" ref="VSP_046865"/>
    </isoform>
</comment>
<comment type="tissue specificity">
    <text evidence="2">Widely distributed in the adult CNS with highest expression in the corpus callosum, caudate nucleus, cerebral cortex, medulla, putamen, spinal cord, substantia nigra and subthalamic nucleus. Weak expression was detected in the adult heart.</text>
</comment>
<comment type="domain">
    <text evidence="5">The C-terminal region is required for localization to tight junctions which occurs in a TJP1/ZO1-independent manner.</text>
</comment>
<comment type="similarity">
    <text evidence="9">Belongs to the PMP-22/EMP/MP20 family.</text>
</comment>
<comment type="sequence caution" evidence="9">
    <conflict type="erroneous initiation">
        <sequence resource="EMBL-CDS" id="AAF29137"/>
    </conflict>
</comment>
<gene>
    <name type="primary">CLDND1</name>
    <name type="synonym">C3orf4</name>
    <name type="ORF">HSPC174</name>
    <name type="ORF">PSEC0054</name>
    <name type="ORF">UNQ2511/PRO6000</name>
</gene>
<keyword id="KW-0025">Alternative splicing</keyword>
<keyword id="KW-0965">Cell junction</keyword>
<keyword id="KW-1003">Cell membrane</keyword>
<keyword id="KW-0325">Glycoprotein</keyword>
<keyword id="KW-0472">Membrane</keyword>
<keyword id="KW-1267">Proteomics identification</keyword>
<keyword id="KW-1185">Reference proteome</keyword>
<keyword id="KW-0796">Tight junction</keyword>
<keyword id="KW-0812">Transmembrane</keyword>
<keyword id="KW-1133">Transmembrane helix</keyword>
<protein>
    <recommendedName>
        <fullName>Claudin domain-containing protein 1</fullName>
    </recommendedName>
    <alternativeName>
        <fullName evidence="8">Claudin-25</fullName>
    </alternativeName>
    <alternativeName>
        <fullName>Membrane protein GENX-3745</fullName>
    </alternativeName>
</protein>
<reference key="1">
    <citation type="journal article" date="2002" name="Gene">
        <title>Characterization of tissue expression and full-length coding sequence of a novel human gene mapping at 3q12.1 and transcribed in oligodendrocytes.</title>
        <authorList>
            <person name="Fayein N.-A."/>
            <person name="Stankoff B."/>
            <person name="Auffray C."/>
            <person name="Devignes M.-D."/>
        </authorList>
    </citation>
    <scope>NUCLEOTIDE SEQUENCE [MRNA]</scope>
    <scope>TISSUE SPECIFICITY (ISOFORM 1)</scope>
    <source>
        <tissue>Brain</tissue>
    </source>
</reference>
<reference key="2">
    <citation type="journal article" date="2000" name="Genome Res.">
        <title>Cloning and functional analysis of cDNAs with open reading frames for 300 previously undefined genes expressed in CD34+ hematopoietic stem/progenitor cells.</title>
        <authorList>
            <person name="Zhang Q.-H."/>
            <person name="Ye M."/>
            <person name="Wu X.-Y."/>
            <person name="Ren S.-X."/>
            <person name="Zhao M."/>
            <person name="Zhao C.-J."/>
            <person name="Fu G."/>
            <person name="Shen Y."/>
            <person name="Fan H.-Y."/>
            <person name="Lu G."/>
            <person name="Zhong M."/>
            <person name="Xu X.-R."/>
            <person name="Han Z.-G."/>
            <person name="Zhang J.-W."/>
            <person name="Tao J."/>
            <person name="Huang Q.-H."/>
            <person name="Zhou J."/>
            <person name="Hu G.-X."/>
            <person name="Gu J."/>
            <person name="Chen S.-J."/>
            <person name="Chen Z."/>
        </authorList>
    </citation>
    <scope>NUCLEOTIDE SEQUENCE [LARGE SCALE MRNA] (ISOFORM 1)</scope>
    <source>
        <tissue>Umbilical cord blood</tissue>
    </source>
</reference>
<reference key="3">
    <citation type="journal article" date="2001" name="Proc. Natl. Acad. Sci. U.S.A.">
        <title>Insight into hepatocellular carcinogenesis at transcriptome level by comparing gene expression profiles of hepatocellular carcinoma with those of corresponding noncancerous liver.</title>
        <authorList>
            <person name="Xu X.R."/>
            <person name="Huang J."/>
            <person name="Xu Z.G."/>
            <person name="Qian B.Z."/>
            <person name="Zhu Z.D."/>
            <person name="Yan Q."/>
            <person name="Cai T."/>
            <person name="Zhang X."/>
            <person name="Xiao H.S."/>
            <person name="Qu J."/>
            <person name="Liu F."/>
            <person name="Huang Q.H."/>
            <person name="Cheng Z.H."/>
            <person name="Li N.G."/>
            <person name="Du J.J."/>
            <person name="Hu W."/>
            <person name="Shen K.T."/>
            <person name="Lu G."/>
            <person name="Fu G."/>
            <person name="Zhong M."/>
            <person name="Xu S.H."/>
            <person name="Gu W.Y."/>
            <person name="Huang W."/>
            <person name="Zhao X.T."/>
            <person name="Hu G.X."/>
            <person name="Gu J.R."/>
            <person name="Chen Z."/>
            <person name="Han Z.G."/>
        </authorList>
    </citation>
    <scope>NUCLEOTIDE SEQUENCE [MRNA] (ISOFORM 3)</scope>
    <source>
        <tissue>Liver</tissue>
    </source>
</reference>
<reference key="4">
    <citation type="journal article" date="2003" name="Genome Res.">
        <title>The secreted protein discovery initiative (SPDI), a large-scale effort to identify novel human secreted and transmembrane proteins: a bioinformatics assessment.</title>
        <authorList>
            <person name="Clark H.F."/>
            <person name="Gurney A.L."/>
            <person name="Abaya E."/>
            <person name="Baker K."/>
            <person name="Baldwin D.T."/>
            <person name="Brush J."/>
            <person name="Chen J."/>
            <person name="Chow B."/>
            <person name="Chui C."/>
            <person name="Crowley C."/>
            <person name="Currell B."/>
            <person name="Deuel B."/>
            <person name="Dowd P."/>
            <person name="Eaton D."/>
            <person name="Foster J.S."/>
            <person name="Grimaldi C."/>
            <person name="Gu Q."/>
            <person name="Hass P.E."/>
            <person name="Heldens S."/>
            <person name="Huang A."/>
            <person name="Kim H.S."/>
            <person name="Klimowski L."/>
            <person name="Jin Y."/>
            <person name="Johnson S."/>
            <person name="Lee J."/>
            <person name="Lewis L."/>
            <person name="Liao D."/>
            <person name="Mark M.R."/>
            <person name="Robbie E."/>
            <person name="Sanchez C."/>
            <person name="Schoenfeld J."/>
            <person name="Seshagiri S."/>
            <person name="Simmons L."/>
            <person name="Singh J."/>
            <person name="Smith V."/>
            <person name="Stinson J."/>
            <person name="Vagts A."/>
            <person name="Vandlen R.L."/>
            <person name="Watanabe C."/>
            <person name="Wieand D."/>
            <person name="Woods K."/>
            <person name="Xie M.-H."/>
            <person name="Yansura D.G."/>
            <person name="Yi S."/>
            <person name="Yu G."/>
            <person name="Yuan J."/>
            <person name="Zhang M."/>
            <person name="Zhang Z."/>
            <person name="Goddard A.D."/>
            <person name="Wood W.I."/>
            <person name="Godowski P.J."/>
            <person name="Gray A.M."/>
        </authorList>
    </citation>
    <scope>NUCLEOTIDE SEQUENCE [LARGE SCALE MRNA] (ISOFORM 2)</scope>
</reference>
<reference key="5">
    <citation type="journal article" date="2005" name="DNA Res.">
        <title>Signal sequence and keyword trap in silico for selection of full-length human cDNAs encoding secretion or membrane proteins from oligo-capped cDNA libraries.</title>
        <authorList>
            <person name="Otsuki T."/>
            <person name="Ota T."/>
            <person name="Nishikawa T."/>
            <person name="Hayashi K."/>
            <person name="Suzuki Y."/>
            <person name="Yamamoto J."/>
            <person name="Wakamatsu A."/>
            <person name="Kimura K."/>
            <person name="Sakamoto K."/>
            <person name="Hatano N."/>
            <person name="Kawai Y."/>
            <person name="Ishii S."/>
            <person name="Saito K."/>
            <person name="Kojima S."/>
            <person name="Sugiyama T."/>
            <person name="Ono T."/>
            <person name="Okano K."/>
            <person name="Yoshikawa Y."/>
            <person name="Aotsuka S."/>
            <person name="Sasaki N."/>
            <person name="Hattori A."/>
            <person name="Okumura K."/>
            <person name="Nagai K."/>
            <person name="Sugano S."/>
            <person name="Isogai T."/>
        </authorList>
    </citation>
    <scope>NUCLEOTIDE SEQUENCE [LARGE SCALE MRNA] (ISOFORM 1)</scope>
    <source>
        <tissue>Teratocarcinoma</tissue>
    </source>
</reference>
<reference key="6">
    <citation type="journal article" date="2007" name="BMC Genomics">
        <title>The full-ORF clone resource of the German cDNA consortium.</title>
        <authorList>
            <person name="Bechtel S."/>
            <person name="Rosenfelder H."/>
            <person name="Duda A."/>
            <person name="Schmidt C.P."/>
            <person name="Ernst U."/>
            <person name="Wellenreuther R."/>
            <person name="Mehrle A."/>
            <person name="Schuster C."/>
            <person name="Bahr A."/>
            <person name="Bloecker H."/>
            <person name="Heubner D."/>
            <person name="Hoerlein A."/>
            <person name="Michel G."/>
            <person name="Wedler H."/>
            <person name="Koehrer K."/>
            <person name="Ottenwaelder B."/>
            <person name="Poustka A."/>
            <person name="Wiemann S."/>
            <person name="Schupp I."/>
        </authorList>
    </citation>
    <scope>NUCLEOTIDE SEQUENCE [LARGE SCALE MRNA] (ISOFORM 1)</scope>
    <source>
        <tissue>Brain</tissue>
    </source>
</reference>
<reference key="7">
    <citation type="journal article" date="2006" name="Nature">
        <title>The DNA sequence, annotation and analysis of human chromosome 3.</title>
        <authorList>
            <person name="Muzny D.M."/>
            <person name="Scherer S.E."/>
            <person name="Kaul R."/>
            <person name="Wang J."/>
            <person name="Yu J."/>
            <person name="Sudbrak R."/>
            <person name="Buhay C.J."/>
            <person name="Chen R."/>
            <person name="Cree A."/>
            <person name="Ding Y."/>
            <person name="Dugan-Rocha S."/>
            <person name="Gill R."/>
            <person name="Gunaratne P."/>
            <person name="Harris R.A."/>
            <person name="Hawes A.C."/>
            <person name="Hernandez J."/>
            <person name="Hodgson A.V."/>
            <person name="Hume J."/>
            <person name="Jackson A."/>
            <person name="Khan Z.M."/>
            <person name="Kovar-Smith C."/>
            <person name="Lewis L.R."/>
            <person name="Lozado R.J."/>
            <person name="Metzker M.L."/>
            <person name="Milosavljevic A."/>
            <person name="Miner G.R."/>
            <person name="Morgan M.B."/>
            <person name="Nazareth L.V."/>
            <person name="Scott G."/>
            <person name="Sodergren E."/>
            <person name="Song X.-Z."/>
            <person name="Steffen D."/>
            <person name="Wei S."/>
            <person name="Wheeler D.A."/>
            <person name="Wright M.W."/>
            <person name="Worley K.C."/>
            <person name="Yuan Y."/>
            <person name="Zhang Z."/>
            <person name="Adams C.Q."/>
            <person name="Ansari-Lari M.A."/>
            <person name="Ayele M."/>
            <person name="Brown M.J."/>
            <person name="Chen G."/>
            <person name="Chen Z."/>
            <person name="Clendenning J."/>
            <person name="Clerc-Blankenburg K.P."/>
            <person name="Chen R."/>
            <person name="Chen Z."/>
            <person name="Davis C."/>
            <person name="Delgado O."/>
            <person name="Dinh H.H."/>
            <person name="Dong W."/>
            <person name="Draper H."/>
            <person name="Ernst S."/>
            <person name="Fu G."/>
            <person name="Gonzalez-Garay M.L."/>
            <person name="Garcia D.K."/>
            <person name="Gillett W."/>
            <person name="Gu J."/>
            <person name="Hao B."/>
            <person name="Haugen E."/>
            <person name="Havlak P."/>
            <person name="He X."/>
            <person name="Hennig S."/>
            <person name="Hu S."/>
            <person name="Huang W."/>
            <person name="Jackson L.R."/>
            <person name="Jacob L.S."/>
            <person name="Kelly S.H."/>
            <person name="Kube M."/>
            <person name="Levy R."/>
            <person name="Li Z."/>
            <person name="Liu B."/>
            <person name="Liu J."/>
            <person name="Liu W."/>
            <person name="Lu J."/>
            <person name="Maheshwari M."/>
            <person name="Nguyen B.-V."/>
            <person name="Okwuonu G.O."/>
            <person name="Palmeiri A."/>
            <person name="Pasternak S."/>
            <person name="Perez L.M."/>
            <person name="Phelps K.A."/>
            <person name="Plopper F.J."/>
            <person name="Qiang B."/>
            <person name="Raymond C."/>
            <person name="Rodriguez R."/>
            <person name="Saenphimmachak C."/>
            <person name="Santibanez J."/>
            <person name="Shen H."/>
            <person name="Shen Y."/>
            <person name="Subramanian S."/>
            <person name="Tabor P.E."/>
            <person name="Verduzco D."/>
            <person name="Waldron L."/>
            <person name="Wang J."/>
            <person name="Wang J."/>
            <person name="Wang Q."/>
            <person name="Williams G.A."/>
            <person name="Wong G.K.-S."/>
            <person name="Yao Z."/>
            <person name="Zhang J."/>
            <person name="Zhang X."/>
            <person name="Zhao G."/>
            <person name="Zhou J."/>
            <person name="Zhou Y."/>
            <person name="Nelson D."/>
            <person name="Lehrach H."/>
            <person name="Reinhardt R."/>
            <person name="Naylor S.L."/>
            <person name="Yang H."/>
            <person name="Olson M."/>
            <person name="Weinstock G."/>
            <person name="Gibbs R.A."/>
        </authorList>
    </citation>
    <scope>NUCLEOTIDE SEQUENCE [LARGE SCALE GENOMIC DNA]</scope>
</reference>
<reference key="8">
    <citation type="submission" date="2005-09" db="EMBL/GenBank/DDBJ databases">
        <authorList>
            <person name="Mural R.J."/>
            <person name="Istrail S."/>
            <person name="Sutton G.G."/>
            <person name="Florea L."/>
            <person name="Halpern A.L."/>
            <person name="Mobarry C.M."/>
            <person name="Lippert R."/>
            <person name="Walenz B."/>
            <person name="Shatkay H."/>
            <person name="Dew I."/>
            <person name="Miller J.R."/>
            <person name="Flanigan M.J."/>
            <person name="Edwards N.J."/>
            <person name="Bolanos R."/>
            <person name="Fasulo D."/>
            <person name="Halldorsson B.V."/>
            <person name="Hannenhalli S."/>
            <person name="Turner R."/>
            <person name="Yooseph S."/>
            <person name="Lu F."/>
            <person name="Nusskern D.R."/>
            <person name="Shue B.C."/>
            <person name="Zheng X.H."/>
            <person name="Zhong F."/>
            <person name="Delcher A.L."/>
            <person name="Huson D.H."/>
            <person name="Kravitz S.A."/>
            <person name="Mouchard L."/>
            <person name="Reinert K."/>
            <person name="Remington K.A."/>
            <person name="Clark A.G."/>
            <person name="Waterman M.S."/>
            <person name="Eichler E.E."/>
            <person name="Adams M.D."/>
            <person name="Hunkapiller M.W."/>
            <person name="Myers E.W."/>
            <person name="Venter J.C."/>
        </authorList>
    </citation>
    <scope>NUCLEOTIDE SEQUENCE [LARGE SCALE GENOMIC DNA]</scope>
</reference>
<reference key="9">
    <citation type="journal article" date="2004" name="Genome Res.">
        <title>The status, quality, and expansion of the NIH full-length cDNA project: the Mammalian Gene Collection (MGC).</title>
        <authorList>
            <consortium name="The MGC Project Team"/>
        </authorList>
    </citation>
    <scope>NUCLEOTIDE SEQUENCE [LARGE SCALE MRNA] (ISOFORM 1)</scope>
    <source>
        <tissue>Brain</tissue>
        <tissue>Eye</tissue>
        <tissue>Hippocampus</tissue>
        <tissue>Spinal cord</tissue>
    </source>
</reference>
<reference key="10">
    <citation type="journal article" date="2011" name="FEBS Lett.">
        <title>Predicted expansion of the claudin multigene family.</title>
        <authorList>
            <person name="Mineta K."/>
            <person name="Yamamoto Y."/>
            <person name="Yamazaki Y."/>
            <person name="Tanaka H."/>
            <person name="Tada Y."/>
            <person name="Saito K."/>
            <person name="Tamura A."/>
            <person name="Igarashi M."/>
            <person name="Endo T."/>
            <person name="Takeuchi K."/>
            <person name="Tsukita S."/>
        </authorList>
    </citation>
    <scope>IDENTIFICATION</scope>
</reference>
<reference key="11">
    <citation type="journal article" date="2009" name="Nat. Biotechnol.">
        <title>Mass-spectrometric identification and relative quantification of N-linked cell surface glycoproteins.</title>
        <authorList>
            <person name="Wollscheid B."/>
            <person name="Bausch-Fluck D."/>
            <person name="Henderson C."/>
            <person name="O'Brien R."/>
            <person name="Bibel M."/>
            <person name="Schiess R."/>
            <person name="Aebersold R."/>
            <person name="Watts J.D."/>
        </authorList>
    </citation>
    <scope>GLYCOSYLATION [LARGE SCALE ANALYSIS] AT ASN-72</scope>
    <source>
        <tissue>Leukemic T-cell</tissue>
    </source>
</reference>
<reference key="12">
    <citation type="journal article" date="2017" name="J. Neurosci. Res.">
        <title>Claudin domain containing 1 contributing to endothelial cell adhesion decreases in presence of cerebellar hemorrhage.</title>
        <authorList>
            <person name="Ohnishi M."/>
            <person name="Ochiai H."/>
            <person name="Matsuoka K."/>
            <person name="Akagi M."/>
            <person name="Nakayama Y."/>
            <person name="Shima A."/>
            <person name="Uda A."/>
            <person name="Matsuoka H."/>
            <person name="Kamishikiryo J."/>
            <person name="Michihara A."/>
            <person name="Inoue A."/>
        </authorList>
    </citation>
    <scope>FUNCTION</scope>
    <scope>SUBCELLULAR LOCATION</scope>
</reference>
<reference key="13">
    <citation type="journal article" date="2024" name="Hum. Mol. Genet.">
        <title>A loss of function mutation in CLDN25 causing Pelizaeus-Merzbacher-like leukodystrophy.</title>
        <authorList>
            <person name="Hashimoto Y."/>
            <person name="Besmond C."/>
            <person name="Boddaert N."/>
            <person name="Munnich A."/>
            <person name="Campbell M."/>
        </authorList>
    </citation>
    <scope>VARIANT PRO-249</scope>
    <scope>CHARACTERIZATION OF VARIANT PRO-249</scope>
    <scope>SUBCELLULAR LOCATION</scope>
</reference>
<organism>
    <name type="scientific">Homo sapiens</name>
    <name type="common">Human</name>
    <dbReference type="NCBI Taxonomy" id="9606"/>
    <lineage>
        <taxon>Eukaryota</taxon>
        <taxon>Metazoa</taxon>
        <taxon>Chordata</taxon>
        <taxon>Craniata</taxon>
        <taxon>Vertebrata</taxon>
        <taxon>Euteleostomi</taxon>
        <taxon>Mammalia</taxon>
        <taxon>Eutheria</taxon>
        <taxon>Euarchontoglires</taxon>
        <taxon>Primates</taxon>
        <taxon>Haplorrhini</taxon>
        <taxon>Catarrhini</taxon>
        <taxon>Hominidae</taxon>
        <taxon>Homo</taxon>
    </lineage>
</organism>
<accession>Q9NY35</accession>
<accession>B3KQR1</accession>
<accession>D3DN36</accession>
<accession>F2Z2D9</accession>
<accession>Q502Y8</accession>
<accession>Q6UVX2</accession>
<accession>Q9BUZ9</accession>
<accession>Q9NZZ5</accession>
<accession>Q9Y4S9</accession>
<evidence type="ECO:0000255" key="1"/>
<evidence type="ECO:0000269" key="2">
    <source>
    </source>
</evidence>
<evidence type="ECO:0000269" key="3">
    <source>
    </source>
</evidence>
<evidence type="ECO:0000269" key="4">
    <source>
    </source>
</evidence>
<evidence type="ECO:0000269" key="5">
    <source>
    </source>
</evidence>
<evidence type="ECO:0000303" key="6">
    <source>
    </source>
</evidence>
<evidence type="ECO:0000303" key="7">
    <source>
    </source>
</evidence>
<evidence type="ECO:0000303" key="8">
    <source>
    </source>
</evidence>
<evidence type="ECO:0000305" key="9"/>
<dbReference type="EMBL" id="AJ270952">
    <property type="protein sequence ID" value="CAB89684.1"/>
    <property type="molecule type" value="mRNA"/>
</dbReference>
<dbReference type="EMBL" id="AF161522">
    <property type="protein sequence ID" value="AAF29137.1"/>
    <property type="status" value="ALT_INIT"/>
    <property type="molecule type" value="mRNA"/>
</dbReference>
<dbReference type="EMBL" id="AV656305">
    <property type="status" value="NOT_ANNOTATED_CDS"/>
    <property type="molecule type" value="mRNA"/>
</dbReference>
<dbReference type="EMBL" id="AY359121">
    <property type="protein sequence ID" value="AAQ89479.1"/>
    <property type="molecule type" value="mRNA"/>
</dbReference>
<dbReference type="EMBL" id="AK075367">
    <property type="protein sequence ID" value="BAG52123.1"/>
    <property type="molecule type" value="mRNA"/>
</dbReference>
<dbReference type="EMBL" id="AL080097">
    <property type="protein sequence ID" value="CAB45709.2"/>
    <property type="molecule type" value="mRNA"/>
</dbReference>
<dbReference type="EMBL" id="AC021660">
    <property type="status" value="NOT_ANNOTATED_CDS"/>
    <property type="molecule type" value="Genomic_DNA"/>
</dbReference>
<dbReference type="EMBL" id="CH471052">
    <property type="protein sequence ID" value="EAW79856.1"/>
    <property type="molecule type" value="Genomic_DNA"/>
</dbReference>
<dbReference type="EMBL" id="CH471052">
    <property type="protein sequence ID" value="EAW79857.1"/>
    <property type="molecule type" value="Genomic_DNA"/>
</dbReference>
<dbReference type="EMBL" id="CH471052">
    <property type="protein sequence ID" value="EAW79859.1"/>
    <property type="molecule type" value="Genomic_DNA"/>
</dbReference>
<dbReference type="EMBL" id="CH471052">
    <property type="protein sequence ID" value="EAW79860.1"/>
    <property type="molecule type" value="Genomic_DNA"/>
</dbReference>
<dbReference type="EMBL" id="BC001757">
    <property type="protein sequence ID" value="AAH01757.2"/>
    <property type="molecule type" value="mRNA"/>
</dbReference>
<dbReference type="EMBL" id="BC013610">
    <property type="protein sequence ID" value="AAH13610.1"/>
    <property type="molecule type" value="mRNA"/>
</dbReference>
<dbReference type="EMBL" id="BC022551">
    <property type="protein sequence ID" value="AAH22551.1"/>
    <property type="molecule type" value="mRNA"/>
</dbReference>
<dbReference type="EMBL" id="BC095441">
    <property type="protein sequence ID" value="AAH95441.1"/>
    <property type="molecule type" value="mRNA"/>
</dbReference>
<dbReference type="CCDS" id="CCDS2930.1">
    <molecule id="Q9NY35-1"/>
</dbReference>
<dbReference type="CCDS" id="CCDS43116.1">
    <molecule id="Q9NY35-3"/>
</dbReference>
<dbReference type="RefSeq" id="NP_001035271.1">
    <molecule id="Q9NY35-1"/>
    <property type="nucleotide sequence ID" value="NM_001040181.2"/>
</dbReference>
<dbReference type="RefSeq" id="NP_001035272.1">
    <property type="nucleotide sequence ID" value="NM_001040182.1"/>
</dbReference>
<dbReference type="RefSeq" id="NP_001035273.1">
    <molecule id="Q9NY35-1"/>
    <property type="nucleotide sequence ID" value="NM_001040183.2"/>
</dbReference>
<dbReference type="RefSeq" id="NP_001035289.1">
    <molecule id="Q9NY35-1"/>
    <property type="nucleotide sequence ID" value="NM_001040199.2"/>
</dbReference>
<dbReference type="RefSeq" id="NP_001035290.1">
    <molecule id="Q9NY35-3"/>
    <property type="nucleotide sequence ID" value="NM_001040200.2"/>
</dbReference>
<dbReference type="RefSeq" id="NP_063948.1">
    <molecule id="Q9NY35-1"/>
    <property type="nucleotide sequence ID" value="NM_019895.3"/>
</dbReference>
<dbReference type="BioGRID" id="121164">
    <property type="interactions" value="76"/>
</dbReference>
<dbReference type="FunCoup" id="Q9NY35">
    <property type="interactions" value="518"/>
</dbReference>
<dbReference type="IntAct" id="Q9NY35">
    <property type="interactions" value="59"/>
</dbReference>
<dbReference type="MINT" id="Q9NY35"/>
<dbReference type="STRING" id="9606.ENSP00000377735"/>
<dbReference type="TCDB" id="8.A.16.2.9">
    <property type="family name" value="the ca(+) channel auxiliary subunit Gama1-Gama8 (ccaGama) family"/>
</dbReference>
<dbReference type="GlyConnect" id="1115">
    <property type="glycosylation" value="2 N-Linked glycans (2 sites)"/>
</dbReference>
<dbReference type="GlyCosmos" id="Q9NY35">
    <property type="glycosylation" value="2 sites, 2 glycans"/>
</dbReference>
<dbReference type="GlyGen" id="Q9NY35">
    <property type="glycosylation" value="2 sites, 7 N-linked glycans (2 sites)"/>
</dbReference>
<dbReference type="iPTMnet" id="Q9NY35"/>
<dbReference type="PhosphoSitePlus" id="Q9NY35"/>
<dbReference type="SwissPalm" id="Q9NY35"/>
<dbReference type="BioMuta" id="CLDND1"/>
<dbReference type="DMDM" id="20532022"/>
<dbReference type="jPOST" id="Q9NY35"/>
<dbReference type="MassIVE" id="Q9NY35"/>
<dbReference type="PaxDb" id="9606-ENSP00000421226"/>
<dbReference type="PeptideAtlas" id="Q9NY35"/>
<dbReference type="ProteomicsDB" id="23686"/>
<dbReference type="ProteomicsDB" id="83161">
    <molecule id="Q9NY35-1"/>
</dbReference>
<dbReference type="ProteomicsDB" id="83162">
    <molecule id="Q9NY35-2"/>
</dbReference>
<dbReference type="Pumba" id="Q9NY35"/>
<dbReference type="Antibodypedia" id="32146">
    <property type="antibodies" value="154 antibodies from 25 providers"/>
</dbReference>
<dbReference type="DNASU" id="56650"/>
<dbReference type="Ensembl" id="ENST00000341181.11">
    <molecule id="Q9NY35-1"/>
    <property type="protein sequence ID" value="ENSP00000340247.6"/>
    <property type="gene ID" value="ENSG00000080822.17"/>
</dbReference>
<dbReference type="Ensembl" id="ENST00000394180.6">
    <molecule id="Q9NY35-1"/>
    <property type="protein sequence ID" value="ENSP00000377734.2"/>
    <property type="gene ID" value="ENSG00000080822.17"/>
</dbReference>
<dbReference type="Ensembl" id="ENST00000394185.6">
    <molecule id="Q9NY35-1"/>
    <property type="protein sequence ID" value="ENSP00000377739.2"/>
    <property type="gene ID" value="ENSG00000080822.17"/>
</dbReference>
<dbReference type="Ensembl" id="ENST00000503004.5">
    <molecule id="Q9NY35-1"/>
    <property type="protein sequence ID" value="ENSP00000421226.1"/>
    <property type="gene ID" value="ENSG00000080822.17"/>
</dbReference>
<dbReference type="Ensembl" id="ENST00000510545.5">
    <molecule id="Q9NY35-1"/>
    <property type="protein sequence ID" value="ENSP00000423590.1"/>
    <property type="gene ID" value="ENSG00000080822.17"/>
</dbReference>
<dbReference type="Ensembl" id="ENST00000511081.5">
    <molecule id="Q9NY35-3"/>
    <property type="protein sequence ID" value="ENSP00000424669.1"/>
    <property type="gene ID" value="ENSG00000080822.17"/>
</dbReference>
<dbReference type="Ensembl" id="ENST00000513287.5">
    <molecule id="Q9NY35-1"/>
    <property type="protein sequence ID" value="ENSP00000426869.1"/>
    <property type="gene ID" value="ENSG00000080822.17"/>
</dbReference>
<dbReference type="GeneID" id="56650"/>
<dbReference type="KEGG" id="hsa:56650"/>
<dbReference type="MANE-Select" id="ENST00000341181.11">
    <property type="protein sequence ID" value="ENSP00000340247.6"/>
    <property type="RefSeq nucleotide sequence ID" value="NM_001040181.2"/>
    <property type="RefSeq protein sequence ID" value="NP_001035271.1"/>
</dbReference>
<dbReference type="UCSC" id="uc003dsp.4">
    <molecule id="Q9NY35-1"/>
    <property type="organism name" value="human"/>
</dbReference>
<dbReference type="AGR" id="HGNC:1322"/>
<dbReference type="CTD" id="56650"/>
<dbReference type="DisGeNET" id="56650"/>
<dbReference type="GeneCards" id="CLDND1"/>
<dbReference type="HGNC" id="HGNC:1322">
    <property type="gene designation" value="CLDND1"/>
</dbReference>
<dbReference type="HPA" id="ENSG00000080822">
    <property type="expression patterns" value="Tissue enriched (brain)"/>
</dbReference>
<dbReference type="MIM" id="619677">
    <property type="type" value="gene"/>
</dbReference>
<dbReference type="neXtProt" id="NX_Q9NY35"/>
<dbReference type="OpenTargets" id="ENSG00000080822"/>
<dbReference type="PharmGKB" id="PA25901"/>
<dbReference type="VEuPathDB" id="HostDB:ENSG00000080822"/>
<dbReference type="eggNOG" id="ENOG502QRAV">
    <property type="taxonomic scope" value="Eukaryota"/>
</dbReference>
<dbReference type="GeneTree" id="ENSGT00390000002596"/>
<dbReference type="HOGENOM" id="CLU_071844_0_0_1"/>
<dbReference type="InParanoid" id="Q9NY35"/>
<dbReference type="OrthoDB" id="9885915at2759"/>
<dbReference type="PAN-GO" id="Q9NY35">
    <property type="GO annotations" value="0 GO annotations based on evolutionary models"/>
</dbReference>
<dbReference type="PhylomeDB" id="Q9NY35"/>
<dbReference type="PathwayCommons" id="Q9NY35"/>
<dbReference type="SignaLink" id="Q9NY35"/>
<dbReference type="BioGRID-ORCS" id="56650">
    <property type="hits" value="66 hits in 1155 CRISPR screens"/>
</dbReference>
<dbReference type="ChiTaRS" id="CLDND1">
    <property type="organism name" value="human"/>
</dbReference>
<dbReference type="GeneWiki" id="CLDND1"/>
<dbReference type="GenomeRNAi" id="56650"/>
<dbReference type="Pharos" id="Q9NY35">
    <property type="development level" value="Tbio"/>
</dbReference>
<dbReference type="PRO" id="PR:Q9NY35"/>
<dbReference type="Proteomes" id="UP000005640">
    <property type="component" value="Chromosome 3"/>
</dbReference>
<dbReference type="RNAct" id="Q9NY35">
    <property type="molecule type" value="protein"/>
</dbReference>
<dbReference type="Bgee" id="ENSG00000080822">
    <property type="expression patterns" value="Expressed in corpus callosum and 198 other cell types or tissues"/>
</dbReference>
<dbReference type="ExpressionAtlas" id="Q9NY35">
    <property type="expression patterns" value="baseline and differential"/>
</dbReference>
<dbReference type="GO" id="GO:0016324">
    <property type="term" value="C:apical plasma membrane"/>
    <property type="evidence" value="ECO:0007669"/>
    <property type="project" value="Ensembl"/>
</dbReference>
<dbReference type="GO" id="GO:0009986">
    <property type="term" value="C:cell surface"/>
    <property type="evidence" value="ECO:0007005"/>
    <property type="project" value="UniProtKB"/>
</dbReference>
<dbReference type="FunFam" id="1.20.140.150:FF:000009">
    <property type="entry name" value="Claudin domain-containing protein 1"/>
    <property type="match status" value="1"/>
</dbReference>
<dbReference type="Gene3D" id="1.20.140.150">
    <property type="match status" value="1"/>
</dbReference>
<dbReference type="InterPro" id="IPR042356">
    <property type="entry name" value="CLDN1"/>
</dbReference>
<dbReference type="InterPro" id="IPR004031">
    <property type="entry name" value="PMP22/EMP/MP20/Claudin"/>
</dbReference>
<dbReference type="PANTHER" id="PTHR14347">
    <property type="entry name" value="CLAUDIN DOMAIN-CONTAINING PROTEIN 1"/>
    <property type="match status" value="1"/>
</dbReference>
<dbReference type="PANTHER" id="PTHR14347:SF3">
    <property type="entry name" value="CLAUDIN DOMAIN-CONTAINING PROTEIN 1"/>
    <property type="match status" value="1"/>
</dbReference>
<dbReference type="Pfam" id="PF13903">
    <property type="entry name" value="Claudin_2"/>
    <property type="match status" value="1"/>
</dbReference>
<feature type="chain" id="PRO_0000164694" description="Claudin domain-containing protein 1">
    <location>
        <begin position="1"/>
        <end position="253"/>
    </location>
</feature>
<feature type="transmembrane region" description="Helical" evidence="1">
    <location>
        <begin position="5"/>
        <end position="25"/>
    </location>
</feature>
<feature type="transmembrane region" description="Helical" evidence="1">
    <location>
        <begin position="141"/>
        <end position="161"/>
    </location>
</feature>
<feature type="transmembrane region" description="Helical" evidence="1">
    <location>
        <begin position="175"/>
        <end position="195"/>
    </location>
</feature>
<feature type="transmembrane region" description="Helical" evidence="1">
    <location>
        <begin position="216"/>
        <end position="236"/>
    </location>
</feature>
<feature type="glycosylation site" description="N-linked (GlcNAc...) asparagine" evidence="1">
    <location>
        <position position="42"/>
    </location>
</feature>
<feature type="glycosylation site" description="N-linked (GlcNAc...) asparagine" evidence="3">
    <location>
        <position position="72"/>
    </location>
</feature>
<feature type="splice variant" id="VSP_046865" description="In isoform 3." evidence="6">
    <original>MDNRFATAFVIACVLSLISTIYMAASIGTDFWYEYRSPVQENSSDLNKSIWDEFISDEADEKTYNDALFRYNGTVGLWRRCITIPKNMHWYSPPERT</original>
    <variation>MG</variation>
    <location>
        <begin position="1"/>
        <end position="97"/>
    </location>
</feature>
<feature type="splice variant" id="VSP_013156" description="In isoform 2." evidence="7">
    <original>GLCT</original>
    <variation>DTML</variation>
    <location>
        <begin position="181"/>
        <end position="184"/>
    </location>
</feature>
<feature type="splice variant" id="VSP_013157" description="In isoform 2." evidence="7">
    <location>
        <begin position="185"/>
        <end position="253"/>
    </location>
</feature>
<feature type="sequence variant" id="VAR_090396" description="Found in a patient with a form of Pelizaeus-Merzbacher-like leukodystrophy; abolishes localization to cell-cell borders." evidence="5">
    <original>A</original>
    <variation>P</variation>
    <location>
        <position position="249"/>
    </location>
</feature>
<feature type="sequence conflict" description="In Ref. 2; AAF29137." evidence="9" ref="2">
    <original>G</original>
    <variation>E</variation>
    <location>
        <position position="213"/>
    </location>
</feature>